<accession>C1EUZ7</accession>
<organism>
    <name type="scientific">Bacillus cereus (strain 03BB102)</name>
    <dbReference type="NCBI Taxonomy" id="572264"/>
    <lineage>
        <taxon>Bacteria</taxon>
        <taxon>Bacillati</taxon>
        <taxon>Bacillota</taxon>
        <taxon>Bacilli</taxon>
        <taxon>Bacillales</taxon>
        <taxon>Bacillaceae</taxon>
        <taxon>Bacillus</taxon>
        <taxon>Bacillus cereus group</taxon>
    </lineage>
</organism>
<reference key="1">
    <citation type="submission" date="2009-02" db="EMBL/GenBank/DDBJ databases">
        <title>Genome sequence of Bacillus cereus 03BB102.</title>
        <authorList>
            <person name="Dodson R.J."/>
            <person name="Jackson P."/>
            <person name="Munk A.C."/>
            <person name="Brettin T."/>
            <person name="Bruce D."/>
            <person name="Detter C."/>
            <person name="Tapia R."/>
            <person name="Han C."/>
            <person name="Sutton G."/>
            <person name="Sims D."/>
        </authorList>
    </citation>
    <scope>NUCLEOTIDE SEQUENCE [LARGE SCALE GENOMIC DNA]</scope>
    <source>
        <strain>03BB102</strain>
    </source>
</reference>
<name>EZRA_BACC3</name>
<dbReference type="EMBL" id="CP001407">
    <property type="protein sequence ID" value="ACO29400.1"/>
    <property type="molecule type" value="Genomic_DNA"/>
</dbReference>
<dbReference type="RefSeq" id="WP_000377289.1">
    <property type="nucleotide sequence ID" value="NZ_CP009318.1"/>
</dbReference>
<dbReference type="SMR" id="C1EUZ7"/>
<dbReference type="GeneID" id="45024522"/>
<dbReference type="KEGG" id="bcx:BCA_4764"/>
<dbReference type="PATRIC" id="fig|572264.18.peg.4713"/>
<dbReference type="Proteomes" id="UP000002210">
    <property type="component" value="Chromosome"/>
</dbReference>
<dbReference type="GO" id="GO:0005886">
    <property type="term" value="C:plasma membrane"/>
    <property type="evidence" value="ECO:0007669"/>
    <property type="project" value="UniProtKB-SubCell"/>
</dbReference>
<dbReference type="GO" id="GO:0005940">
    <property type="term" value="C:septin ring"/>
    <property type="evidence" value="ECO:0007669"/>
    <property type="project" value="InterPro"/>
</dbReference>
<dbReference type="GO" id="GO:0000917">
    <property type="term" value="P:division septum assembly"/>
    <property type="evidence" value="ECO:0007669"/>
    <property type="project" value="UniProtKB-KW"/>
</dbReference>
<dbReference type="GO" id="GO:0000921">
    <property type="term" value="P:septin ring assembly"/>
    <property type="evidence" value="ECO:0007669"/>
    <property type="project" value="InterPro"/>
</dbReference>
<dbReference type="HAMAP" id="MF_00728">
    <property type="entry name" value="EzrA"/>
    <property type="match status" value="1"/>
</dbReference>
<dbReference type="InterPro" id="IPR010379">
    <property type="entry name" value="EzrA"/>
</dbReference>
<dbReference type="NCBIfam" id="NF003411">
    <property type="entry name" value="PRK04778.1-5"/>
    <property type="match status" value="1"/>
</dbReference>
<dbReference type="NCBIfam" id="NF003413">
    <property type="entry name" value="PRK04778.1-7"/>
    <property type="match status" value="1"/>
</dbReference>
<dbReference type="Pfam" id="PF06160">
    <property type="entry name" value="EzrA"/>
    <property type="match status" value="1"/>
</dbReference>
<keyword id="KW-0131">Cell cycle</keyword>
<keyword id="KW-0132">Cell division</keyword>
<keyword id="KW-1003">Cell membrane</keyword>
<keyword id="KW-0175">Coiled coil</keyword>
<keyword id="KW-0472">Membrane</keyword>
<keyword id="KW-0717">Septation</keyword>
<keyword id="KW-0812">Transmembrane</keyword>
<keyword id="KW-1133">Transmembrane helix</keyword>
<evidence type="ECO:0000255" key="1">
    <source>
        <dbReference type="HAMAP-Rule" id="MF_00728"/>
    </source>
</evidence>
<sequence>MDSILTIVIIVVSSILVLLMIELVIRNRSYKDIEALEQWKQEIKDKPVADELKRVKDLNMTGQTEELFGKWREEWDEIVSTTIPKADKDLAQARKFASQFSFRKAKHAMNESISGLDDADNRITDILNELQQLLESHEKNSSEIEGLRDTYRSMKKSVLAHRHMYGAAEQKIEEMLDAESEKFKTFEEATNNGDYLKAREIVISLEEGLADLEIIIHQIPDLLVECQATLPVQLEDLLHGHNDMVRQGYVLDYLEVPKEVRDMTKQLQTCLIDIQELHITEAAEKVENLKTRLDGFYDQLEQEVHARHYVEQKTLSVYEDLEEIRTETIETKAETQLVKQSYQLQDKDIESQKVIEKQMHILTKRFEMLQLRVAEQDIAFSIIREELEEIYEQCETLKVLHAEYKEMLQTMRKEEFEAREKLQEMRNTIFETKRFMQKSNLPGLPESIMEDLKRGQMAMQAVYEQLEVKPLNMNAVNSSLEEAYTTVNGVAEMTEELIGQAYLVEKLIQYGNRYRSHDENLAESLNYAEKLFREYQYDAALEQAASVLEQLEPGVVQKIAEYVDNEQTLS</sequence>
<proteinExistence type="inferred from homology"/>
<feature type="chain" id="PRO_1000148068" description="Septation ring formation regulator EzrA">
    <location>
        <begin position="1"/>
        <end position="570"/>
    </location>
</feature>
<feature type="topological domain" description="Extracellular" evidence="1">
    <location>
        <begin position="1"/>
        <end position="6"/>
    </location>
</feature>
<feature type="transmembrane region" description="Helical" evidence="1">
    <location>
        <begin position="7"/>
        <end position="25"/>
    </location>
</feature>
<feature type="topological domain" description="Cytoplasmic" evidence="1">
    <location>
        <begin position="26"/>
        <end position="570"/>
    </location>
</feature>
<feature type="coiled-coil region" evidence="1">
    <location>
        <begin position="115"/>
        <end position="149"/>
    </location>
</feature>
<feature type="coiled-coil region" evidence="1">
    <location>
        <begin position="272"/>
        <end position="304"/>
    </location>
</feature>
<feature type="coiled-coil region" evidence="1">
    <location>
        <begin position="355"/>
        <end position="429"/>
    </location>
</feature>
<gene>
    <name evidence="1" type="primary">ezrA</name>
    <name type="ordered locus">BCA_4764</name>
</gene>
<protein>
    <recommendedName>
        <fullName evidence="1">Septation ring formation regulator EzrA</fullName>
    </recommendedName>
</protein>
<comment type="function">
    <text evidence="1">Negative regulator of FtsZ ring formation; modulates the frequency and position of FtsZ ring formation. Inhibits FtsZ ring formation at polar sites. Interacts either with FtsZ or with one of its binding partners to promote depolymerization.</text>
</comment>
<comment type="subcellular location">
    <subcellularLocation>
        <location evidence="1">Cell membrane</location>
        <topology evidence="1">Single-pass membrane protein</topology>
    </subcellularLocation>
    <text evidence="1">Colocalized with FtsZ to the nascent septal site.</text>
</comment>
<comment type="similarity">
    <text evidence="1">Belongs to the EzrA family.</text>
</comment>